<protein>
    <recommendedName>
        <fullName>Apoptosis-inducing factor 3</fullName>
        <ecNumber>1.-.-.-</ecNumber>
    </recommendedName>
    <alternativeName>
        <fullName>Apoptosis-inducing factor-like protein</fullName>
    </alternativeName>
</protein>
<dbReference type="EC" id="1.-.-.-"/>
<dbReference type="EMBL" id="AK049928">
    <property type="protein sequence ID" value="BAC33988.1"/>
    <property type="molecule type" value="mRNA"/>
</dbReference>
<dbReference type="EMBL" id="AK158809">
    <property type="protein sequence ID" value="BAE34677.1"/>
    <property type="molecule type" value="mRNA"/>
</dbReference>
<dbReference type="EMBL" id="BC096476">
    <property type="protein sequence ID" value="AAH96476.1"/>
    <property type="molecule type" value="mRNA"/>
</dbReference>
<dbReference type="EMBL" id="BC120685">
    <property type="protein sequence ID" value="AAI20686.1"/>
    <property type="molecule type" value="mRNA"/>
</dbReference>
<dbReference type="CCDS" id="CCDS28003.1">
    <molecule id="Q3TY86-2"/>
</dbReference>
<dbReference type="CCDS" id="CCDS79430.1">
    <molecule id="Q3TY86-1"/>
</dbReference>
<dbReference type="RefSeq" id="NP_001277999.1">
    <molecule id="Q3TY86-1"/>
    <property type="nucleotide sequence ID" value="NM_001291070.1"/>
</dbReference>
<dbReference type="RefSeq" id="NP_780387.2">
    <molecule id="Q3TY86-2"/>
    <property type="nucleotide sequence ID" value="NM_175178.4"/>
</dbReference>
<dbReference type="RefSeq" id="XP_006522655.1">
    <molecule id="Q3TY86-1"/>
    <property type="nucleotide sequence ID" value="XM_006522592.4"/>
</dbReference>
<dbReference type="SMR" id="Q3TY86"/>
<dbReference type="BioGRID" id="215195">
    <property type="interactions" value="1"/>
</dbReference>
<dbReference type="FunCoup" id="Q3TY86">
    <property type="interactions" value="824"/>
</dbReference>
<dbReference type="STRING" id="10090.ENSMUSP00000111349"/>
<dbReference type="iPTMnet" id="Q3TY86"/>
<dbReference type="PhosphoSitePlus" id="Q3TY86"/>
<dbReference type="SwissPalm" id="Q3TY86"/>
<dbReference type="PaxDb" id="10090-ENSMUSP00000023448"/>
<dbReference type="PeptideAtlas" id="Q3TY86"/>
<dbReference type="ProteomicsDB" id="296344">
    <molecule id="Q3TY86-1"/>
</dbReference>
<dbReference type="ProteomicsDB" id="296345">
    <molecule id="Q3TY86-2"/>
</dbReference>
<dbReference type="ProteomicsDB" id="296346">
    <molecule id="Q3TY86-3"/>
</dbReference>
<dbReference type="Antibodypedia" id="231">
    <property type="antibodies" value="204 antibodies from 30 providers"/>
</dbReference>
<dbReference type="DNASU" id="72168"/>
<dbReference type="Ensembl" id="ENSMUST00000023448.15">
    <molecule id="Q3TY86-2"/>
    <property type="protein sequence ID" value="ENSMUSP00000023448.7"/>
    <property type="gene ID" value="ENSMUSG00000022763.19"/>
</dbReference>
<dbReference type="Ensembl" id="ENSMUST00000115685.10">
    <molecule id="Q3TY86-1"/>
    <property type="protein sequence ID" value="ENSMUSP00000111349.2"/>
    <property type="gene ID" value="ENSMUSG00000022763.19"/>
</dbReference>
<dbReference type="GeneID" id="72168"/>
<dbReference type="KEGG" id="mmu:72168"/>
<dbReference type="UCSC" id="uc007ykw.2">
    <molecule id="Q3TY86-1"/>
    <property type="organism name" value="mouse"/>
</dbReference>
<dbReference type="UCSC" id="uc007ykx.2">
    <molecule id="Q3TY86-3"/>
    <property type="organism name" value="mouse"/>
</dbReference>
<dbReference type="UCSC" id="uc007yky.2">
    <molecule id="Q3TY86-2"/>
    <property type="organism name" value="mouse"/>
</dbReference>
<dbReference type="AGR" id="MGI:1919418"/>
<dbReference type="CTD" id="150209"/>
<dbReference type="MGI" id="MGI:1919418">
    <property type="gene designation" value="Aifm3"/>
</dbReference>
<dbReference type="VEuPathDB" id="HostDB:ENSMUSG00000022763"/>
<dbReference type="eggNOG" id="KOG1336">
    <property type="taxonomic scope" value="Eukaryota"/>
</dbReference>
<dbReference type="GeneTree" id="ENSGT00940000160448"/>
<dbReference type="HOGENOM" id="CLU_003291_4_2_1"/>
<dbReference type="InParanoid" id="Q3TY86"/>
<dbReference type="OMA" id="PRCTHYG"/>
<dbReference type="OrthoDB" id="432169at2759"/>
<dbReference type="PhylomeDB" id="Q3TY86"/>
<dbReference type="TreeFam" id="TF314028"/>
<dbReference type="BioGRID-ORCS" id="72168">
    <property type="hits" value="2 hits in 77 CRISPR screens"/>
</dbReference>
<dbReference type="CD-CODE" id="CE726F99">
    <property type="entry name" value="Postsynaptic density"/>
</dbReference>
<dbReference type="ChiTaRS" id="Aifm3">
    <property type="organism name" value="mouse"/>
</dbReference>
<dbReference type="PRO" id="PR:Q3TY86"/>
<dbReference type="Proteomes" id="UP000000589">
    <property type="component" value="Chromosome 16"/>
</dbReference>
<dbReference type="RNAct" id="Q3TY86">
    <property type="molecule type" value="protein"/>
</dbReference>
<dbReference type="Bgee" id="ENSMUSG00000022763">
    <property type="expression patterns" value="Expressed in cerebellar cortex and 146 other cell types or tissues"/>
</dbReference>
<dbReference type="GO" id="GO:0005829">
    <property type="term" value="C:cytosol"/>
    <property type="evidence" value="ECO:0007669"/>
    <property type="project" value="Ensembl"/>
</dbReference>
<dbReference type="GO" id="GO:0005783">
    <property type="term" value="C:endoplasmic reticulum"/>
    <property type="evidence" value="ECO:0000250"/>
    <property type="project" value="HGNC-UCL"/>
</dbReference>
<dbReference type="GO" id="GO:0005743">
    <property type="term" value="C:mitochondrial inner membrane"/>
    <property type="evidence" value="ECO:0000250"/>
    <property type="project" value="HGNC-UCL"/>
</dbReference>
<dbReference type="GO" id="GO:0005739">
    <property type="term" value="C:mitochondrion"/>
    <property type="evidence" value="ECO:0007005"/>
    <property type="project" value="MGI"/>
</dbReference>
<dbReference type="GO" id="GO:0051537">
    <property type="term" value="F:2 iron, 2 sulfur cluster binding"/>
    <property type="evidence" value="ECO:0007669"/>
    <property type="project" value="UniProtKB-KW"/>
</dbReference>
<dbReference type="GO" id="GO:0046872">
    <property type="term" value="F:metal ion binding"/>
    <property type="evidence" value="ECO:0007669"/>
    <property type="project" value="UniProtKB-KW"/>
</dbReference>
<dbReference type="GO" id="GO:0016491">
    <property type="term" value="F:oxidoreductase activity"/>
    <property type="evidence" value="ECO:0007669"/>
    <property type="project" value="UniProtKB-KW"/>
</dbReference>
<dbReference type="GO" id="GO:0097194">
    <property type="term" value="P:execution phase of apoptosis"/>
    <property type="evidence" value="ECO:0000250"/>
    <property type="project" value="HGNC"/>
</dbReference>
<dbReference type="CDD" id="cd03478">
    <property type="entry name" value="Rieske_AIFL_N"/>
    <property type="match status" value="1"/>
</dbReference>
<dbReference type="FunFam" id="3.50.50.60:FF:000058">
    <property type="entry name" value="apoptosis-inducing factor 3 isoform X1"/>
    <property type="match status" value="1"/>
</dbReference>
<dbReference type="FunFam" id="2.102.10.10:FF:000003">
    <property type="entry name" value="apoptosis-inducing factor 3 isoform X2"/>
    <property type="match status" value="1"/>
</dbReference>
<dbReference type="FunFam" id="3.30.390.30:FF:000011">
    <property type="entry name" value="Apoptosis-inducing factor, mitochondrion-associated, 3"/>
    <property type="match status" value="1"/>
</dbReference>
<dbReference type="Gene3D" id="3.30.390.30">
    <property type="match status" value="1"/>
</dbReference>
<dbReference type="Gene3D" id="3.50.50.60">
    <property type="entry name" value="FAD/NAD(P)-binding domain"/>
    <property type="match status" value="2"/>
</dbReference>
<dbReference type="Gene3D" id="2.102.10.10">
    <property type="entry name" value="Rieske [2Fe-2S] iron-sulphur domain"/>
    <property type="match status" value="1"/>
</dbReference>
<dbReference type="InterPro" id="IPR050446">
    <property type="entry name" value="FAD-oxidoreductase/Apoptosis"/>
</dbReference>
<dbReference type="InterPro" id="IPR036188">
    <property type="entry name" value="FAD/NAD-bd_sf"/>
</dbReference>
<dbReference type="InterPro" id="IPR023753">
    <property type="entry name" value="FAD/NAD-binding_dom"/>
</dbReference>
<dbReference type="InterPro" id="IPR016156">
    <property type="entry name" value="FAD/NAD-linked_Rdtase_dimer_sf"/>
</dbReference>
<dbReference type="InterPro" id="IPR028202">
    <property type="entry name" value="Reductase_C"/>
</dbReference>
<dbReference type="InterPro" id="IPR017941">
    <property type="entry name" value="Rieske_2Fe-2S"/>
</dbReference>
<dbReference type="InterPro" id="IPR036922">
    <property type="entry name" value="Rieske_2Fe-2S_sf"/>
</dbReference>
<dbReference type="PANTHER" id="PTHR43557">
    <property type="entry name" value="APOPTOSIS-INDUCING FACTOR 1"/>
    <property type="match status" value="1"/>
</dbReference>
<dbReference type="PANTHER" id="PTHR43557:SF8">
    <property type="entry name" value="APOPTOSIS-INDUCING FACTOR 3"/>
    <property type="match status" value="1"/>
</dbReference>
<dbReference type="Pfam" id="PF07992">
    <property type="entry name" value="Pyr_redox_2"/>
    <property type="match status" value="1"/>
</dbReference>
<dbReference type="Pfam" id="PF14759">
    <property type="entry name" value="Reductase_C"/>
    <property type="match status" value="1"/>
</dbReference>
<dbReference type="Pfam" id="PF00355">
    <property type="entry name" value="Rieske"/>
    <property type="match status" value="1"/>
</dbReference>
<dbReference type="PRINTS" id="PR00368">
    <property type="entry name" value="FADPNR"/>
</dbReference>
<dbReference type="PRINTS" id="PR00469">
    <property type="entry name" value="PNDRDTASEII"/>
</dbReference>
<dbReference type="SUPFAM" id="SSF51905">
    <property type="entry name" value="FAD/NAD(P)-binding domain"/>
    <property type="match status" value="1"/>
</dbReference>
<dbReference type="SUPFAM" id="SSF55424">
    <property type="entry name" value="FAD/NAD-linked reductases, dimerisation (C-terminal) domain"/>
    <property type="match status" value="1"/>
</dbReference>
<dbReference type="SUPFAM" id="SSF50022">
    <property type="entry name" value="ISP domain"/>
    <property type="match status" value="1"/>
</dbReference>
<dbReference type="PROSITE" id="PS51296">
    <property type="entry name" value="RIESKE"/>
    <property type="match status" value="1"/>
</dbReference>
<accession>Q3TY86</accession>
<accession>Q0VBD6</accession>
<accession>Q4VAA4</accession>
<accession>Q8BWV0</accession>
<name>AIFM3_MOUSE</name>
<proteinExistence type="evidence at protein level"/>
<sequence length="605" mass="66792">MGGCFSKPKPVELKIEVVLPEKERGKEELSASGKGSPRGYQGNGTARHFHAEERLPTPQPYPSPQDCVEATVCHVKDLENGQMREVELGWGKVLLVKDNGEFHALGHKCPHYGAPLVKGVLSRGRVRCPWHGACFNISTGDLEDFPGLDSLHKFQVKIEKEKVTIRASKQALQLQRRTKVMAKCISPSAGHSSSTNVLIVGAGAAGLVCAETLRQEGFSDRIVLCTLDRHLPYDRAKLSKSLDAQPEQLALRPKEFFRAYGIEMLTEAQVVTVDVRNKKVVFKDGFKLEYSKLLLAPGSSPKTLTCKGKDVENVFTIRTPEDANRVLRLARGRNAVVVGAGFLGMEVAAYLTEKAHSVSVVELEETPFRRFLGERVGRALMKMFENNRVKFYMQTEVSELRAQEGKLQEVVLKSSKVLRADVCVLGIGAVPATGFLRQSGIGLDSRGFIPVNKMMQTNVPGVFAAGDAVTFPLAWRNNRKVNIPHWQMAHAQGRVAAQNMLAQEAEINTVPYLWTAMFGKSLRYAGYGEGFDDVIIQGDLEELKFVAFYTKSDEVIAVASMNYDPIVSKVAEVLASGRAIRKREVELFMLHSKTGDMSWLTGKGS</sequence>
<evidence type="ECO:0000250" key="1"/>
<evidence type="ECO:0000255" key="2"/>
<evidence type="ECO:0000255" key="3">
    <source>
        <dbReference type="PROSITE-ProRule" id="PRU00628"/>
    </source>
</evidence>
<evidence type="ECO:0000256" key="4">
    <source>
        <dbReference type="SAM" id="MobiDB-lite"/>
    </source>
</evidence>
<evidence type="ECO:0000303" key="5">
    <source>
    </source>
</evidence>
<evidence type="ECO:0000303" key="6">
    <source>
    </source>
</evidence>
<evidence type="ECO:0000305" key="7"/>
<feature type="chain" id="PRO_0000255661" description="Apoptosis-inducing factor 3">
    <location>
        <begin position="1"/>
        <end position="605"/>
    </location>
</feature>
<feature type="domain" description="Rieske" evidence="3">
    <location>
        <begin position="70"/>
        <end position="165"/>
    </location>
</feature>
<feature type="region of interest" description="Disordered" evidence="4">
    <location>
        <begin position="18"/>
        <end position="44"/>
    </location>
</feature>
<feature type="compositionally biased region" description="Basic and acidic residues" evidence="4">
    <location>
        <begin position="18"/>
        <end position="29"/>
    </location>
</feature>
<feature type="binding site" evidence="3">
    <location>
        <position position="109"/>
    </location>
    <ligand>
        <name>[2Fe-2S] cluster</name>
        <dbReference type="ChEBI" id="CHEBI:190135"/>
    </ligand>
</feature>
<feature type="binding site" evidence="3">
    <location>
        <position position="111"/>
    </location>
    <ligand>
        <name>[2Fe-2S] cluster</name>
        <dbReference type="ChEBI" id="CHEBI:190135"/>
    </ligand>
</feature>
<feature type="binding site" evidence="3">
    <location>
        <position position="128"/>
    </location>
    <ligand>
        <name>[2Fe-2S] cluster</name>
        <dbReference type="ChEBI" id="CHEBI:190135"/>
    </ligand>
</feature>
<feature type="binding site" evidence="3">
    <location>
        <position position="131"/>
    </location>
    <ligand>
        <name>[2Fe-2S] cluster</name>
        <dbReference type="ChEBI" id="CHEBI:190135"/>
    </ligand>
</feature>
<feature type="binding site" evidence="2">
    <location>
        <begin position="201"/>
        <end position="205"/>
    </location>
    <ligand>
        <name>FAD</name>
        <dbReference type="ChEBI" id="CHEBI:57692"/>
    </ligand>
</feature>
<feature type="binding site" evidence="2">
    <location>
        <position position="235"/>
    </location>
    <ligand>
        <name>FAD</name>
        <dbReference type="ChEBI" id="CHEBI:57692"/>
    </ligand>
</feature>
<feature type="binding site" evidence="2">
    <location>
        <position position="240"/>
    </location>
    <ligand>
        <name>FAD</name>
        <dbReference type="ChEBI" id="CHEBI:57692"/>
    </ligand>
</feature>
<feature type="binding site" evidence="2">
    <location>
        <position position="270"/>
    </location>
    <ligand>
        <name>FAD</name>
        <dbReference type="ChEBI" id="CHEBI:57692"/>
    </ligand>
</feature>
<feature type="binding site" evidence="2">
    <location>
        <position position="467"/>
    </location>
    <ligand>
        <name>FAD</name>
        <dbReference type="ChEBI" id="CHEBI:57692"/>
    </ligand>
</feature>
<feature type="binding site" evidence="2">
    <location>
        <position position="514"/>
    </location>
    <ligand>
        <name>FAD</name>
        <dbReference type="ChEBI" id="CHEBI:57692"/>
    </ligand>
</feature>
<feature type="splice variant" id="VSP_021304" description="In isoform 3." evidence="5 6">
    <original>RVAAQNM</original>
    <variation>MASPEAS</variation>
    <location>
        <begin position="494"/>
        <end position="500"/>
    </location>
</feature>
<feature type="splice variant" id="VSP_021305" description="In isoform 3." evidence="5 6">
    <location>
        <begin position="501"/>
        <end position="605"/>
    </location>
</feature>
<feature type="splice variant" id="VSP_021306" description="In isoform 2." evidence="5">
    <location>
        <begin position="587"/>
        <end position="593"/>
    </location>
</feature>
<feature type="sequence conflict" description="In Ref. 1; BAC33988." evidence="7" ref="1">
    <original>S</original>
    <variation>T</variation>
    <location>
        <position position="138"/>
    </location>
</feature>
<keyword id="KW-0001">2Fe-2S</keyword>
<keyword id="KW-0025">Alternative splicing</keyword>
<keyword id="KW-0053">Apoptosis</keyword>
<keyword id="KW-0249">Electron transport</keyword>
<keyword id="KW-0274">FAD</keyword>
<keyword id="KW-0285">Flavoprotein</keyword>
<keyword id="KW-0408">Iron</keyword>
<keyword id="KW-0411">Iron-sulfur</keyword>
<keyword id="KW-0479">Metal-binding</keyword>
<keyword id="KW-0496">Mitochondrion</keyword>
<keyword id="KW-0560">Oxidoreductase</keyword>
<keyword id="KW-1185">Reference proteome</keyword>
<keyword id="KW-0813">Transport</keyword>
<organism>
    <name type="scientific">Mus musculus</name>
    <name type="common">Mouse</name>
    <dbReference type="NCBI Taxonomy" id="10090"/>
    <lineage>
        <taxon>Eukaryota</taxon>
        <taxon>Metazoa</taxon>
        <taxon>Chordata</taxon>
        <taxon>Craniata</taxon>
        <taxon>Vertebrata</taxon>
        <taxon>Euteleostomi</taxon>
        <taxon>Mammalia</taxon>
        <taxon>Eutheria</taxon>
        <taxon>Euarchontoglires</taxon>
        <taxon>Glires</taxon>
        <taxon>Rodentia</taxon>
        <taxon>Myomorpha</taxon>
        <taxon>Muroidea</taxon>
        <taxon>Muridae</taxon>
        <taxon>Murinae</taxon>
        <taxon>Mus</taxon>
        <taxon>Mus</taxon>
    </lineage>
</organism>
<gene>
    <name type="primary">Aifm3</name>
    <name type="synonym">Aifl</name>
</gene>
<comment type="function">
    <text evidence="1">Induces apoptosis through a caspase dependent pathway. Reduces mitochondrial membrane potential (By similarity).</text>
</comment>
<comment type="subcellular location">
    <subcellularLocation>
        <location>Mitochondrion</location>
    </subcellularLocation>
    <text evidence="1">Does not translocate to the nucleus upon induction of apoptosis.</text>
</comment>
<comment type="alternative products">
    <event type="alternative splicing"/>
    <isoform>
        <id>Q3TY86-1</id>
        <name>1</name>
        <sequence type="displayed"/>
    </isoform>
    <isoform>
        <id>Q3TY86-2</id>
        <name>2</name>
        <sequence type="described" ref="VSP_021306"/>
    </isoform>
    <isoform>
        <id>Q3TY86-3</id>
        <name>3</name>
        <sequence type="described" ref="VSP_021304 VSP_021305"/>
    </isoform>
</comment>
<comment type="domain">
    <text evidence="1">The Rieske domain induces apoptosis.</text>
</comment>
<comment type="miscellaneous">
    <molecule>Isoform 3</molecule>
    <text evidence="7">May be due to intron retention.</text>
</comment>
<comment type="similarity">
    <text evidence="7">Belongs to the FAD-dependent oxidoreductase family.</text>
</comment>
<reference key="1">
    <citation type="journal article" date="2005" name="Science">
        <title>The transcriptional landscape of the mammalian genome.</title>
        <authorList>
            <person name="Carninci P."/>
            <person name="Kasukawa T."/>
            <person name="Katayama S."/>
            <person name="Gough J."/>
            <person name="Frith M.C."/>
            <person name="Maeda N."/>
            <person name="Oyama R."/>
            <person name="Ravasi T."/>
            <person name="Lenhard B."/>
            <person name="Wells C."/>
            <person name="Kodzius R."/>
            <person name="Shimokawa K."/>
            <person name="Bajic V.B."/>
            <person name="Brenner S.E."/>
            <person name="Batalov S."/>
            <person name="Forrest A.R."/>
            <person name="Zavolan M."/>
            <person name="Davis M.J."/>
            <person name="Wilming L.G."/>
            <person name="Aidinis V."/>
            <person name="Allen J.E."/>
            <person name="Ambesi-Impiombato A."/>
            <person name="Apweiler R."/>
            <person name="Aturaliya R.N."/>
            <person name="Bailey T.L."/>
            <person name="Bansal M."/>
            <person name="Baxter L."/>
            <person name="Beisel K.W."/>
            <person name="Bersano T."/>
            <person name="Bono H."/>
            <person name="Chalk A.M."/>
            <person name="Chiu K.P."/>
            <person name="Choudhary V."/>
            <person name="Christoffels A."/>
            <person name="Clutterbuck D.R."/>
            <person name="Crowe M.L."/>
            <person name="Dalla E."/>
            <person name="Dalrymple B.P."/>
            <person name="de Bono B."/>
            <person name="Della Gatta G."/>
            <person name="di Bernardo D."/>
            <person name="Down T."/>
            <person name="Engstrom P."/>
            <person name="Fagiolini M."/>
            <person name="Faulkner G."/>
            <person name="Fletcher C.F."/>
            <person name="Fukushima T."/>
            <person name="Furuno M."/>
            <person name="Futaki S."/>
            <person name="Gariboldi M."/>
            <person name="Georgii-Hemming P."/>
            <person name="Gingeras T.R."/>
            <person name="Gojobori T."/>
            <person name="Green R.E."/>
            <person name="Gustincich S."/>
            <person name="Harbers M."/>
            <person name="Hayashi Y."/>
            <person name="Hensch T.K."/>
            <person name="Hirokawa N."/>
            <person name="Hill D."/>
            <person name="Huminiecki L."/>
            <person name="Iacono M."/>
            <person name="Ikeo K."/>
            <person name="Iwama A."/>
            <person name="Ishikawa T."/>
            <person name="Jakt M."/>
            <person name="Kanapin A."/>
            <person name="Katoh M."/>
            <person name="Kawasawa Y."/>
            <person name="Kelso J."/>
            <person name="Kitamura H."/>
            <person name="Kitano H."/>
            <person name="Kollias G."/>
            <person name="Krishnan S.P."/>
            <person name="Kruger A."/>
            <person name="Kummerfeld S.K."/>
            <person name="Kurochkin I.V."/>
            <person name="Lareau L.F."/>
            <person name="Lazarevic D."/>
            <person name="Lipovich L."/>
            <person name="Liu J."/>
            <person name="Liuni S."/>
            <person name="McWilliam S."/>
            <person name="Madan Babu M."/>
            <person name="Madera M."/>
            <person name="Marchionni L."/>
            <person name="Matsuda H."/>
            <person name="Matsuzawa S."/>
            <person name="Miki H."/>
            <person name="Mignone F."/>
            <person name="Miyake S."/>
            <person name="Morris K."/>
            <person name="Mottagui-Tabar S."/>
            <person name="Mulder N."/>
            <person name="Nakano N."/>
            <person name="Nakauchi H."/>
            <person name="Ng P."/>
            <person name="Nilsson R."/>
            <person name="Nishiguchi S."/>
            <person name="Nishikawa S."/>
            <person name="Nori F."/>
            <person name="Ohara O."/>
            <person name="Okazaki Y."/>
            <person name="Orlando V."/>
            <person name="Pang K.C."/>
            <person name="Pavan W.J."/>
            <person name="Pavesi G."/>
            <person name="Pesole G."/>
            <person name="Petrovsky N."/>
            <person name="Piazza S."/>
            <person name="Reed J."/>
            <person name="Reid J.F."/>
            <person name="Ring B.Z."/>
            <person name="Ringwald M."/>
            <person name="Rost B."/>
            <person name="Ruan Y."/>
            <person name="Salzberg S.L."/>
            <person name="Sandelin A."/>
            <person name="Schneider C."/>
            <person name="Schoenbach C."/>
            <person name="Sekiguchi K."/>
            <person name="Semple C.A."/>
            <person name="Seno S."/>
            <person name="Sessa L."/>
            <person name="Sheng Y."/>
            <person name="Shibata Y."/>
            <person name="Shimada H."/>
            <person name="Shimada K."/>
            <person name="Silva D."/>
            <person name="Sinclair B."/>
            <person name="Sperling S."/>
            <person name="Stupka E."/>
            <person name="Sugiura K."/>
            <person name="Sultana R."/>
            <person name="Takenaka Y."/>
            <person name="Taki K."/>
            <person name="Tammoja K."/>
            <person name="Tan S.L."/>
            <person name="Tang S."/>
            <person name="Taylor M.S."/>
            <person name="Tegner J."/>
            <person name="Teichmann S.A."/>
            <person name="Ueda H.R."/>
            <person name="van Nimwegen E."/>
            <person name="Verardo R."/>
            <person name="Wei C.L."/>
            <person name="Yagi K."/>
            <person name="Yamanishi H."/>
            <person name="Zabarovsky E."/>
            <person name="Zhu S."/>
            <person name="Zimmer A."/>
            <person name="Hide W."/>
            <person name="Bult C."/>
            <person name="Grimmond S.M."/>
            <person name="Teasdale R.D."/>
            <person name="Liu E.T."/>
            <person name="Brusic V."/>
            <person name="Quackenbush J."/>
            <person name="Wahlestedt C."/>
            <person name="Mattick J.S."/>
            <person name="Hume D.A."/>
            <person name="Kai C."/>
            <person name="Sasaki D."/>
            <person name="Tomaru Y."/>
            <person name="Fukuda S."/>
            <person name="Kanamori-Katayama M."/>
            <person name="Suzuki M."/>
            <person name="Aoki J."/>
            <person name="Arakawa T."/>
            <person name="Iida J."/>
            <person name="Imamura K."/>
            <person name="Itoh M."/>
            <person name="Kato T."/>
            <person name="Kawaji H."/>
            <person name="Kawagashira N."/>
            <person name="Kawashima T."/>
            <person name="Kojima M."/>
            <person name="Kondo S."/>
            <person name="Konno H."/>
            <person name="Nakano K."/>
            <person name="Ninomiya N."/>
            <person name="Nishio T."/>
            <person name="Okada M."/>
            <person name="Plessy C."/>
            <person name="Shibata K."/>
            <person name="Shiraki T."/>
            <person name="Suzuki S."/>
            <person name="Tagami M."/>
            <person name="Waki K."/>
            <person name="Watahiki A."/>
            <person name="Okamura-Oho Y."/>
            <person name="Suzuki H."/>
            <person name="Kawai J."/>
            <person name="Hayashizaki Y."/>
        </authorList>
    </citation>
    <scope>NUCLEOTIDE SEQUENCE [LARGE SCALE MRNA] (ISOFORMS 1 AND 3)</scope>
    <source>
        <strain>C57BL/6J</strain>
        <tissue>Hippocampus</tissue>
        <tissue>Visual cortex</tissue>
    </source>
</reference>
<reference key="2">
    <citation type="journal article" date="2004" name="Genome Res.">
        <title>The status, quality, and expansion of the NIH full-length cDNA project: the Mammalian Gene Collection (MGC).</title>
        <authorList>
            <consortium name="The MGC Project Team"/>
        </authorList>
    </citation>
    <scope>NUCLEOTIDE SEQUENCE [LARGE SCALE MRNA] (ISOFORMS 2 AND 3)</scope>
    <source>
        <strain>FVB/N</strain>
        <tissue>Brain</tissue>
        <tissue>Kidney</tissue>
    </source>
</reference>
<reference key="3">
    <citation type="journal article" date="2010" name="Cell">
        <title>A tissue-specific atlas of mouse protein phosphorylation and expression.</title>
        <authorList>
            <person name="Huttlin E.L."/>
            <person name="Jedrychowski M.P."/>
            <person name="Elias J.E."/>
            <person name="Goswami T."/>
            <person name="Rad R."/>
            <person name="Beausoleil S.A."/>
            <person name="Villen J."/>
            <person name="Haas W."/>
            <person name="Sowa M.E."/>
            <person name="Gygi S.P."/>
        </authorList>
    </citation>
    <scope>IDENTIFICATION BY MASS SPECTROMETRY [LARGE SCALE ANALYSIS]</scope>
    <source>
        <tissue>Brain</tissue>
    </source>
</reference>